<name>Y2175_MYCTU</name>
<organism>
    <name type="scientific">Mycobacterium tuberculosis (strain ATCC 25618 / H37Rv)</name>
    <dbReference type="NCBI Taxonomy" id="83332"/>
    <lineage>
        <taxon>Bacteria</taxon>
        <taxon>Bacillati</taxon>
        <taxon>Actinomycetota</taxon>
        <taxon>Actinomycetes</taxon>
        <taxon>Mycobacteriales</taxon>
        <taxon>Mycobacteriaceae</taxon>
        <taxon>Mycobacterium</taxon>
        <taxon>Mycobacterium tuberculosis complex</taxon>
    </lineage>
</organism>
<dbReference type="EMBL" id="AL123456">
    <property type="protein sequence ID" value="CCP44952.1"/>
    <property type="molecule type" value="Genomic_DNA"/>
</dbReference>
<dbReference type="PIR" id="A70936">
    <property type="entry name" value="A70936"/>
</dbReference>
<dbReference type="RefSeq" id="NP_216691.1">
    <property type="nucleotide sequence ID" value="NC_000962.3"/>
</dbReference>
<dbReference type="RefSeq" id="WP_003900481.1">
    <property type="nucleotide sequence ID" value="NC_000962.3"/>
</dbReference>
<dbReference type="PDB" id="2KFS">
    <property type="method" value="NMR"/>
    <property type="chains" value="A=1-146"/>
</dbReference>
<dbReference type="PDBsum" id="2KFS"/>
<dbReference type="BMRB" id="O53509"/>
<dbReference type="SMR" id="O53509"/>
<dbReference type="STRING" id="83332.Rv2175c"/>
<dbReference type="iPTMnet" id="O53509"/>
<dbReference type="PaxDb" id="83332-Rv2175c"/>
<dbReference type="DNASU" id="887852"/>
<dbReference type="GeneID" id="887852"/>
<dbReference type="KEGG" id="mtu:Rv2175c"/>
<dbReference type="KEGG" id="mtv:RVBD_2175c"/>
<dbReference type="PATRIC" id="fig|83332.111.peg.2421"/>
<dbReference type="TubercuList" id="Rv2175c"/>
<dbReference type="eggNOG" id="ENOG5032W34">
    <property type="taxonomic scope" value="Bacteria"/>
</dbReference>
<dbReference type="InParanoid" id="O53509"/>
<dbReference type="OrthoDB" id="3784042at2"/>
<dbReference type="PhylomeDB" id="O53509"/>
<dbReference type="EvolutionaryTrace" id="O53509"/>
<dbReference type="Proteomes" id="UP000001584">
    <property type="component" value="Chromosome"/>
</dbReference>
<dbReference type="GO" id="GO:0003677">
    <property type="term" value="F:DNA binding"/>
    <property type="evidence" value="ECO:0000314"/>
    <property type="project" value="MTBBASE"/>
</dbReference>
<dbReference type="InterPro" id="IPR041098">
    <property type="entry name" value="Rv2175c_C"/>
</dbReference>
<dbReference type="InterPro" id="IPR048576">
    <property type="entry name" value="Rv2175c_wHTH"/>
</dbReference>
<dbReference type="Pfam" id="PF18367">
    <property type="entry name" value="Rv2175c_C"/>
    <property type="match status" value="1"/>
</dbReference>
<dbReference type="Pfam" id="PF21531">
    <property type="entry name" value="Rv2175c_wHTH"/>
    <property type="match status" value="1"/>
</dbReference>
<evidence type="ECO:0000256" key="1">
    <source>
        <dbReference type="SAM" id="MobiDB-lite"/>
    </source>
</evidence>
<evidence type="ECO:0000269" key="2">
    <source>
    </source>
</evidence>
<evidence type="ECO:0000269" key="3">
    <source>
    </source>
</evidence>
<evidence type="ECO:0007829" key="4">
    <source>
        <dbReference type="PDB" id="2KFS"/>
    </source>
</evidence>
<comment type="function">
    <text evidence="3">Binds DNA at low salt concentrations.</text>
</comment>
<comment type="subunit">
    <text evidence="2 3">Monomer in solution. May form homodimers. Interacts with phosphorylated PknL.</text>
</comment>
<comment type="domain">
    <text evidence="3">Contains an unusual winged helix-turn-helix (wHTH) DNA-binding motif missing the typical third helix.</text>
</comment>
<comment type="PTM">
    <text evidence="2 3">Phosphorylated by PknL. Phosphorylation negatively regulates DNA-binding activity.</text>
</comment>
<sequence>MPGRAPGSTLARVGSIPAGDDVLDPDEPTYDLPRVAELLGVPVSKVAQQLREGHLVAVRRAGGVVIPQVFFTNSGQVVKSLPGLLTILHDGGYRDTEIMRWLFTPDPSLTITRDGSRDAVSNARPVDALHAHQAREVVRRAQAMAY</sequence>
<reference key="1">
    <citation type="journal article" date="1998" name="Nature">
        <title>Deciphering the biology of Mycobacterium tuberculosis from the complete genome sequence.</title>
        <authorList>
            <person name="Cole S.T."/>
            <person name="Brosch R."/>
            <person name="Parkhill J."/>
            <person name="Garnier T."/>
            <person name="Churcher C.M."/>
            <person name="Harris D.E."/>
            <person name="Gordon S.V."/>
            <person name="Eiglmeier K."/>
            <person name="Gas S."/>
            <person name="Barry C.E. III"/>
            <person name="Tekaia F."/>
            <person name="Badcock K."/>
            <person name="Basham D."/>
            <person name="Brown D."/>
            <person name="Chillingworth T."/>
            <person name="Connor R."/>
            <person name="Davies R.M."/>
            <person name="Devlin K."/>
            <person name="Feltwell T."/>
            <person name="Gentles S."/>
            <person name="Hamlin N."/>
            <person name="Holroyd S."/>
            <person name="Hornsby T."/>
            <person name="Jagels K."/>
            <person name="Krogh A."/>
            <person name="McLean J."/>
            <person name="Moule S."/>
            <person name="Murphy L.D."/>
            <person name="Oliver S."/>
            <person name="Osborne J."/>
            <person name="Quail M.A."/>
            <person name="Rajandream M.A."/>
            <person name="Rogers J."/>
            <person name="Rutter S."/>
            <person name="Seeger K."/>
            <person name="Skelton S."/>
            <person name="Squares S."/>
            <person name="Squares R."/>
            <person name="Sulston J.E."/>
            <person name="Taylor K."/>
            <person name="Whitehead S."/>
            <person name="Barrell B.G."/>
        </authorList>
    </citation>
    <scope>NUCLEOTIDE SEQUENCE [LARGE SCALE GENOMIC DNA]</scope>
    <source>
        <strain>ATCC 25618 / H37Rv</strain>
    </source>
</reference>
<reference key="2">
    <citation type="journal article" date="2008" name="Proteomics">
        <title>The Mycobacterium tuberculosis serine/threonine kinase PknL phosphorylates Rv2175c: mass spectrometric profiling of the activation loop phosphorylation sites and their role in the recruitment of Rv2175c.</title>
        <authorList>
            <person name="Canova M.J."/>
            <person name="Veyron-Churlet R."/>
            <person name="Zanella-Cleon I."/>
            <person name="Cohen-Gonsaud M."/>
            <person name="Cozzone A.J."/>
            <person name="Becchi M."/>
            <person name="Kremer L."/>
            <person name="Molle V."/>
        </authorList>
    </citation>
    <scope>INTERACTION WITH PKNL</scope>
    <scope>PHOSPHORYLATION</scope>
    <source>
        <strain>ATCC 25618 / H37Rv</strain>
    </source>
</reference>
<reference key="3">
    <citation type="journal article" date="2011" name="Mol. Cell. Proteomics">
        <title>Proteogenomic analysis of Mycobacterium tuberculosis by high resolution mass spectrometry.</title>
        <authorList>
            <person name="Kelkar D.S."/>
            <person name="Kumar D."/>
            <person name="Kumar P."/>
            <person name="Balakrishnan L."/>
            <person name="Muthusamy B."/>
            <person name="Yadav A.K."/>
            <person name="Shrivastava P."/>
            <person name="Marimuthu A."/>
            <person name="Anand S."/>
            <person name="Sundaram H."/>
            <person name="Kingsbury R."/>
            <person name="Harsha H.C."/>
            <person name="Nair B."/>
            <person name="Prasad T.S."/>
            <person name="Chauhan D.S."/>
            <person name="Katoch K."/>
            <person name="Katoch V.M."/>
            <person name="Kumar P."/>
            <person name="Chaerkady R."/>
            <person name="Ramachandran S."/>
            <person name="Dash D."/>
            <person name="Pandey A."/>
        </authorList>
    </citation>
    <scope>IDENTIFICATION BY MASS SPECTROMETRY [LARGE SCALE ANALYSIS]</scope>
    <source>
        <strain>ATCC 25618 / H37Rv</strain>
    </source>
</reference>
<reference key="4">
    <citation type="journal article" date="2009" name="J. Biol. Chem.">
        <title>The Mycobacterium tuberculosis Ser/Thr kinase substrate Rv2175c is a DNA-binding protein regulated by phosphorylation.</title>
        <authorList>
            <person name="Cohen-Gonsaud M."/>
            <person name="Barthe P."/>
            <person name="Canova M.J."/>
            <person name="Stagier-Simon C."/>
            <person name="Kremer L."/>
            <person name="Roumestand C."/>
            <person name="Molle V."/>
        </authorList>
    </citation>
    <scope>STRUCTURE BY NMR</scope>
    <scope>FUNCTION</scope>
    <scope>DNA-BINDING</scope>
    <scope>SUBUNIT</scope>
    <scope>DOMAIN</scope>
    <scope>PHOSPHORYLATION AT THR-9</scope>
    <scope>MUTAGENESIS OF THR-9</scope>
    <source>
        <strain>ATCC 25618 / H37Rv</strain>
    </source>
</reference>
<accession>O53509</accession>
<accession>F2GJZ7</accession>
<accession>L0TBJ0</accession>
<protein>
    <recommendedName>
        <fullName>DNA-binding protein Rv2175c</fullName>
    </recommendedName>
</protein>
<keyword id="KW-0002">3D-structure</keyword>
<keyword id="KW-0238">DNA-binding</keyword>
<keyword id="KW-0597">Phosphoprotein</keyword>
<keyword id="KW-1185">Reference proteome</keyword>
<feature type="chain" id="PRO_0000420875" description="DNA-binding protein Rv2175c">
    <location>
        <begin position="1"/>
        <end position="146"/>
    </location>
</feature>
<feature type="region of interest" description="Disordered" evidence="1">
    <location>
        <begin position="1"/>
        <end position="27"/>
    </location>
</feature>
<feature type="modified residue" description="Phosphothreonine" evidence="3">
    <location>
        <position position="9"/>
    </location>
</feature>
<feature type="mutagenesis site" description="Lack of phosphorylation. Retains DNA-binding activity." evidence="3">
    <original>T</original>
    <variation>A</variation>
    <location>
        <position position="9"/>
    </location>
</feature>
<feature type="mutagenesis site" description="Abolishes DNA-binding activity." evidence="3">
    <original>T</original>
    <variation>D</variation>
    <variation>E</variation>
    <location>
        <position position="9"/>
    </location>
</feature>
<feature type="strand" evidence="4">
    <location>
        <begin position="29"/>
        <end position="31"/>
    </location>
</feature>
<feature type="helix" evidence="4">
    <location>
        <begin position="32"/>
        <end position="39"/>
    </location>
</feature>
<feature type="helix" evidence="4">
    <location>
        <begin position="43"/>
        <end position="51"/>
    </location>
</feature>
<feature type="strand" evidence="4">
    <location>
        <begin position="58"/>
        <end position="60"/>
    </location>
</feature>
<feature type="strand" evidence="4">
    <location>
        <begin position="63"/>
        <end position="67"/>
    </location>
</feature>
<feature type="helix" evidence="4">
    <location>
        <begin position="68"/>
        <end position="70"/>
    </location>
</feature>
<feature type="helix" evidence="4">
    <location>
        <begin position="81"/>
        <end position="90"/>
    </location>
</feature>
<feature type="helix" evidence="4">
    <location>
        <begin position="95"/>
        <end position="102"/>
    </location>
</feature>
<feature type="strand" evidence="4">
    <location>
        <begin position="106"/>
        <end position="112"/>
    </location>
</feature>
<feature type="strand" evidence="4">
    <location>
        <begin position="116"/>
        <end position="123"/>
    </location>
</feature>
<feature type="helix" evidence="4">
    <location>
        <begin position="125"/>
        <end position="130"/>
    </location>
</feature>
<feature type="helix" evidence="4">
    <location>
        <begin position="134"/>
        <end position="145"/>
    </location>
</feature>
<gene>
    <name type="ordered locus">Rv2175c</name>
</gene>
<proteinExistence type="evidence at protein level"/>